<feature type="chain" id="PRO_1000205332" description="Large ribosomal subunit protein eL34">
    <location>
        <begin position="1"/>
        <end position="85"/>
    </location>
</feature>
<evidence type="ECO:0000255" key="1">
    <source>
        <dbReference type="HAMAP-Rule" id="MF_00349"/>
    </source>
</evidence>
<evidence type="ECO:0000305" key="2"/>
<gene>
    <name evidence="1" type="primary">rpl34e</name>
    <name type="ordered locus">M164_1440</name>
</gene>
<accession>C4KHI2</accession>
<dbReference type="EMBL" id="CP001402">
    <property type="protein sequence ID" value="ACR42046.1"/>
    <property type="molecule type" value="Genomic_DNA"/>
</dbReference>
<dbReference type="RefSeq" id="WP_012711444.1">
    <property type="nucleotide sequence ID" value="NC_012726.1"/>
</dbReference>
<dbReference type="SMR" id="C4KHI2"/>
<dbReference type="KEGG" id="sid:M164_1440"/>
<dbReference type="HOGENOM" id="CLU_118652_2_0_2"/>
<dbReference type="Proteomes" id="UP000001479">
    <property type="component" value="Chromosome"/>
</dbReference>
<dbReference type="GO" id="GO:1990904">
    <property type="term" value="C:ribonucleoprotein complex"/>
    <property type="evidence" value="ECO:0007669"/>
    <property type="project" value="UniProtKB-KW"/>
</dbReference>
<dbReference type="GO" id="GO:0005840">
    <property type="term" value="C:ribosome"/>
    <property type="evidence" value="ECO:0007669"/>
    <property type="project" value="UniProtKB-KW"/>
</dbReference>
<dbReference type="GO" id="GO:0003735">
    <property type="term" value="F:structural constituent of ribosome"/>
    <property type="evidence" value="ECO:0007669"/>
    <property type="project" value="InterPro"/>
</dbReference>
<dbReference type="GO" id="GO:0006412">
    <property type="term" value="P:translation"/>
    <property type="evidence" value="ECO:0007669"/>
    <property type="project" value="UniProtKB-UniRule"/>
</dbReference>
<dbReference type="Gene3D" id="6.20.340.10">
    <property type="match status" value="1"/>
</dbReference>
<dbReference type="HAMAP" id="MF_00349">
    <property type="entry name" value="Ribosomal_eL34"/>
    <property type="match status" value="1"/>
</dbReference>
<dbReference type="InterPro" id="IPR008195">
    <property type="entry name" value="Ribosomal_eL34"/>
</dbReference>
<dbReference type="InterPro" id="IPR038562">
    <property type="entry name" value="Ribosomal_eL34_C_sf"/>
</dbReference>
<dbReference type="InterPro" id="IPR018065">
    <property type="entry name" value="Ribosomal_eL34_CS"/>
</dbReference>
<dbReference type="InterPro" id="IPR047868">
    <property type="entry name" value="Ribosomal_L34e_arc-type"/>
</dbReference>
<dbReference type="NCBIfam" id="NF003143">
    <property type="entry name" value="PRK04059.1"/>
    <property type="match status" value="1"/>
</dbReference>
<dbReference type="Pfam" id="PF01199">
    <property type="entry name" value="Ribosomal_L34e"/>
    <property type="match status" value="1"/>
</dbReference>
<dbReference type="PRINTS" id="PR01250">
    <property type="entry name" value="RIBOSOMALL34"/>
</dbReference>
<dbReference type="PROSITE" id="PS01145">
    <property type="entry name" value="RIBOSOMAL_L34E"/>
    <property type="match status" value="1"/>
</dbReference>
<comment type="similarity">
    <text evidence="1">Belongs to the eukaryotic ribosomal protein eL34 family.</text>
</comment>
<keyword id="KW-0687">Ribonucleoprotein</keyword>
<keyword id="KW-0689">Ribosomal protein</keyword>
<protein>
    <recommendedName>
        <fullName evidence="1">Large ribosomal subunit protein eL34</fullName>
    </recommendedName>
    <alternativeName>
        <fullName evidence="2">50S ribosomal protein L34e</fullName>
    </alternativeName>
</protein>
<sequence>MPRPALRSRSLRRIYVKLPSGKTAIHYERKKNDIPKCAMCKKPLHGVKTNFLHKYGKSEKRPERPFGGYLCSSCLAQLIKAMVRQ</sequence>
<proteinExistence type="inferred from homology"/>
<organism>
    <name type="scientific">Saccharolobus islandicus (strain M.16.4 / Kamchatka #3)</name>
    <name type="common">Sulfolobus islandicus</name>
    <dbReference type="NCBI Taxonomy" id="426118"/>
    <lineage>
        <taxon>Archaea</taxon>
        <taxon>Thermoproteota</taxon>
        <taxon>Thermoprotei</taxon>
        <taxon>Sulfolobales</taxon>
        <taxon>Sulfolobaceae</taxon>
        <taxon>Saccharolobus</taxon>
    </lineage>
</organism>
<name>RL34_SACI6</name>
<reference key="1">
    <citation type="journal article" date="2009" name="Proc. Natl. Acad. Sci. U.S.A.">
        <title>Biogeography of the Sulfolobus islandicus pan-genome.</title>
        <authorList>
            <person name="Reno M.L."/>
            <person name="Held N.L."/>
            <person name="Fields C.J."/>
            <person name="Burke P.V."/>
            <person name="Whitaker R.J."/>
        </authorList>
    </citation>
    <scope>NUCLEOTIDE SEQUENCE [LARGE SCALE GENOMIC DNA]</scope>
    <source>
        <strain>M.16.4 / Kamchatka #3</strain>
    </source>
</reference>